<dbReference type="EC" id="6.2.1.5" evidence="1"/>
<dbReference type="EMBL" id="CP001230">
    <property type="protein sequence ID" value="ACO03617.1"/>
    <property type="molecule type" value="Genomic_DNA"/>
</dbReference>
<dbReference type="RefSeq" id="WP_012675856.1">
    <property type="nucleotide sequence ID" value="NC_012440.1"/>
</dbReference>
<dbReference type="SMR" id="C0QQH3"/>
<dbReference type="STRING" id="123214.PERMA_1133"/>
<dbReference type="PaxDb" id="123214-PERMA_1133"/>
<dbReference type="KEGG" id="pmx:PERMA_1133"/>
<dbReference type="eggNOG" id="COG0045">
    <property type="taxonomic scope" value="Bacteria"/>
</dbReference>
<dbReference type="HOGENOM" id="CLU_037430_0_2_0"/>
<dbReference type="OrthoDB" id="9802602at2"/>
<dbReference type="UniPathway" id="UPA00223">
    <property type="reaction ID" value="UER00999"/>
</dbReference>
<dbReference type="Proteomes" id="UP000001366">
    <property type="component" value="Chromosome"/>
</dbReference>
<dbReference type="GO" id="GO:0005829">
    <property type="term" value="C:cytosol"/>
    <property type="evidence" value="ECO:0007669"/>
    <property type="project" value="TreeGrafter"/>
</dbReference>
<dbReference type="GO" id="GO:0042709">
    <property type="term" value="C:succinate-CoA ligase complex"/>
    <property type="evidence" value="ECO:0007669"/>
    <property type="project" value="TreeGrafter"/>
</dbReference>
<dbReference type="GO" id="GO:0005524">
    <property type="term" value="F:ATP binding"/>
    <property type="evidence" value="ECO:0007669"/>
    <property type="project" value="UniProtKB-UniRule"/>
</dbReference>
<dbReference type="GO" id="GO:0000287">
    <property type="term" value="F:magnesium ion binding"/>
    <property type="evidence" value="ECO:0007669"/>
    <property type="project" value="UniProtKB-UniRule"/>
</dbReference>
<dbReference type="GO" id="GO:0004775">
    <property type="term" value="F:succinate-CoA ligase (ADP-forming) activity"/>
    <property type="evidence" value="ECO:0007669"/>
    <property type="project" value="UniProtKB-UniRule"/>
</dbReference>
<dbReference type="GO" id="GO:0004776">
    <property type="term" value="F:succinate-CoA ligase (GDP-forming) activity"/>
    <property type="evidence" value="ECO:0007669"/>
    <property type="project" value="RHEA"/>
</dbReference>
<dbReference type="GO" id="GO:0006104">
    <property type="term" value="P:succinyl-CoA metabolic process"/>
    <property type="evidence" value="ECO:0007669"/>
    <property type="project" value="TreeGrafter"/>
</dbReference>
<dbReference type="GO" id="GO:0006099">
    <property type="term" value="P:tricarboxylic acid cycle"/>
    <property type="evidence" value="ECO:0007669"/>
    <property type="project" value="UniProtKB-UniRule"/>
</dbReference>
<dbReference type="FunFam" id="3.30.1490.20:FF:000002">
    <property type="entry name" value="Succinate--CoA ligase [ADP-forming] subunit beta"/>
    <property type="match status" value="1"/>
</dbReference>
<dbReference type="FunFam" id="3.30.470.20:FF:000002">
    <property type="entry name" value="Succinate--CoA ligase [ADP-forming] subunit beta"/>
    <property type="match status" value="1"/>
</dbReference>
<dbReference type="FunFam" id="3.40.50.261:FF:000001">
    <property type="entry name" value="Succinate--CoA ligase [ADP-forming] subunit beta"/>
    <property type="match status" value="1"/>
</dbReference>
<dbReference type="Gene3D" id="3.30.1490.20">
    <property type="entry name" value="ATP-grasp fold, A domain"/>
    <property type="match status" value="1"/>
</dbReference>
<dbReference type="Gene3D" id="3.30.470.20">
    <property type="entry name" value="ATP-grasp fold, B domain"/>
    <property type="match status" value="1"/>
</dbReference>
<dbReference type="Gene3D" id="3.40.50.261">
    <property type="entry name" value="Succinyl-CoA synthetase domains"/>
    <property type="match status" value="1"/>
</dbReference>
<dbReference type="HAMAP" id="MF_00558">
    <property type="entry name" value="Succ_CoA_beta"/>
    <property type="match status" value="1"/>
</dbReference>
<dbReference type="InterPro" id="IPR011761">
    <property type="entry name" value="ATP-grasp"/>
</dbReference>
<dbReference type="InterPro" id="IPR013650">
    <property type="entry name" value="ATP-grasp_succ-CoA_synth-type"/>
</dbReference>
<dbReference type="InterPro" id="IPR013815">
    <property type="entry name" value="ATP_grasp_subdomain_1"/>
</dbReference>
<dbReference type="InterPro" id="IPR017866">
    <property type="entry name" value="Succ-CoA_synthase_bsu_CS"/>
</dbReference>
<dbReference type="InterPro" id="IPR005811">
    <property type="entry name" value="SUCC_ACL_C"/>
</dbReference>
<dbReference type="InterPro" id="IPR005809">
    <property type="entry name" value="Succ_CoA_ligase-like_bsu"/>
</dbReference>
<dbReference type="InterPro" id="IPR016102">
    <property type="entry name" value="Succinyl-CoA_synth-like"/>
</dbReference>
<dbReference type="NCBIfam" id="NF001913">
    <property type="entry name" value="PRK00696.1"/>
    <property type="match status" value="1"/>
</dbReference>
<dbReference type="NCBIfam" id="TIGR01016">
    <property type="entry name" value="sucCoAbeta"/>
    <property type="match status" value="1"/>
</dbReference>
<dbReference type="PANTHER" id="PTHR11815:SF10">
    <property type="entry name" value="SUCCINATE--COA LIGASE [GDP-FORMING] SUBUNIT BETA, MITOCHONDRIAL"/>
    <property type="match status" value="1"/>
</dbReference>
<dbReference type="PANTHER" id="PTHR11815">
    <property type="entry name" value="SUCCINYL-COA SYNTHETASE BETA CHAIN"/>
    <property type="match status" value="1"/>
</dbReference>
<dbReference type="Pfam" id="PF08442">
    <property type="entry name" value="ATP-grasp_2"/>
    <property type="match status" value="1"/>
</dbReference>
<dbReference type="Pfam" id="PF00549">
    <property type="entry name" value="Ligase_CoA"/>
    <property type="match status" value="1"/>
</dbReference>
<dbReference type="PIRSF" id="PIRSF001554">
    <property type="entry name" value="SucCS_beta"/>
    <property type="match status" value="1"/>
</dbReference>
<dbReference type="SUPFAM" id="SSF56059">
    <property type="entry name" value="Glutathione synthetase ATP-binding domain-like"/>
    <property type="match status" value="1"/>
</dbReference>
<dbReference type="SUPFAM" id="SSF52210">
    <property type="entry name" value="Succinyl-CoA synthetase domains"/>
    <property type="match status" value="1"/>
</dbReference>
<dbReference type="PROSITE" id="PS50975">
    <property type="entry name" value="ATP_GRASP"/>
    <property type="match status" value="1"/>
</dbReference>
<dbReference type="PROSITE" id="PS01217">
    <property type="entry name" value="SUCCINYL_COA_LIG_3"/>
    <property type="match status" value="1"/>
</dbReference>
<evidence type="ECO:0000255" key="1">
    <source>
        <dbReference type="HAMAP-Rule" id="MF_00558"/>
    </source>
</evidence>
<gene>
    <name evidence="1" type="primary">sucC</name>
    <name type="ordered locus">PERMA_1133</name>
</gene>
<name>SUCC_PERMH</name>
<reference key="1">
    <citation type="journal article" date="2009" name="J. Bacteriol.">
        <title>Complete and draft genome sequences of six members of the Aquificales.</title>
        <authorList>
            <person name="Reysenbach A.-L."/>
            <person name="Hamamura N."/>
            <person name="Podar M."/>
            <person name="Griffiths E."/>
            <person name="Ferreira S."/>
            <person name="Hochstein R."/>
            <person name="Heidelberg J."/>
            <person name="Johnson J."/>
            <person name="Mead D."/>
            <person name="Pohorille A."/>
            <person name="Sarmiento M."/>
            <person name="Schweighofer K."/>
            <person name="Seshadri R."/>
            <person name="Voytek M.A."/>
        </authorList>
    </citation>
    <scope>NUCLEOTIDE SEQUENCE [LARGE SCALE GENOMIC DNA]</scope>
    <source>
        <strain>DSM 14350 / EX-H1</strain>
    </source>
</reference>
<feature type="chain" id="PRO_1000197711" description="Succinate--CoA ligase [ADP-forming] subunit beta">
    <location>
        <begin position="1"/>
        <end position="388"/>
    </location>
</feature>
<feature type="domain" description="ATP-grasp" evidence="1">
    <location>
        <begin position="9"/>
        <end position="244"/>
    </location>
</feature>
<feature type="binding site" evidence="1">
    <location>
        <position position="46"/>
    </location>
    <ligand>
        <name>ATP</name>
        <dbReference type="ChEBI" id="CHEBI:30616"/>
    </ligand>
</feature>
<feature type="binding site" evidence="1">
    <location>
        <begin position="53"/>
        <end position="55"/>
    </location>
    <ligand>
        <name>ATP</name>
        <dbReference type="ChEBI" id="CHEBI:30616"/>
    </ligand>
</feature>
<feature type="binding site" evidence="1">
    <location>
        <position position="99"/>
    </location>
    <ligand>
        <name>ATP</name>
        <dbReference type="ChEBI" id="CHEBI:30616"/>
    </ligand>
</feature>
<feature type="binding site" evidence="1">
    <location>
        <position position="102"/>
    </location>
    <ligand>
        <name>ATP</name>
        <dbReference type="ChEBI" id="CHEBI:30616"/>
    </ligand>
</feature>
<feature type="binding site" evidence="1">
    <location>
        <position position="107"/>
    </location>
    <ligand>
        <name>ATP</name>
        <dbReference type="ChEBI" id="CHEBI:30616"/>
    </ligand>
</feature>
<feature type="binding site" evidence="1">
    <location>
        <position position="199"/>
    </location>
    <ligand>
        <name>Mg(2+)</name>
        <dbReference type="ChEBI" id="CHEBI:18420"/>
    </ligand>
</feature>
<feature type="binding site" evidence="1">
    <location>
        <position position="213"/>
    </location>
    <ligand>
        <name>Mg(2+)</name>
        <dbReference type="ChEBI" id="CHEBI:18420"/>
    </ligand>
</feature>
<feature type="binding site" evidence="1">
    <location>
        <position position="264"/>
    </location>
    <ligand>
        <name>substrate</name>
        <note>ligand shared with subunit alpha</note>
    </ligand>
</feature>
<feature type="binding site" evidence="1">
    <location>
        <begin position="321"/>
        <end position="323"/>
    </location>
    <ligand>
        <name>substrate</name>
        <note>ligand shared with subunit alpha</note>
    </ligand>
</feature>
<organism>
    <name type="scientific">Persephonella marina (strain DSM 14350 / EX-H1)</name>
    <dbReference type="NCBI Taxonomy" id="123214"/>
    <lineage>
        <taxon>Bacteria</taxon>
        <taxon>Pseudomonadati</taxon>
        <taxon>Aquificota</taxon>
        <taxon>Aquificia</taxon>
        <taxon>Aquificales</taxon>
        <taxon>Hydrogenothermaceae</taxon>
        <taxon>Persephonella</taxon>
    </lineage>
</organism>
<comment type="function">
    <text evidence="1">Succinyl-CoA synthetase functions in the citric acid cycle (TCA), coupling the hydrolysis of succinyl-CoA to the synthesis of either ATP or GTP and thus represents the only step of substrate-level phosphorylation in the TCA. The beta subunit provides nucleotide specificity of the enzyme and binds the substrate succinate, while the binding sites for coenzyme A and phosphate are found in the alpha subunit.</text>
</comment>
<comment type="catalytic activity">
    <reaction evidence="1">
        <text>succinate + ATP + CoA = succinyl-CoA + ADP + phosphate</text>
        <dbReference type="Rhea" id="RHEA:17661"/>
        <dbReference type="ChEBI" id="CHEBI:30031"/>
        <dbReference type="ChEBI" id="CHEBI:30616"/>
        <dbReference type="ChEBI" id="CHEBI:43474"/>
        <dbReference type="ChEBI" id="CHEBI:57287"/>
        <dbReference type="ChEBI" id="CHEBI:57292"/>
        <dbReference type="ChEBI" id="CHEBI:456216"/>
        <dbReference type="EC" id="6.2.1.5"/>
    </reaction>
    <physiologicalReaction direction="right-to-left" evidence="1">
        <dbReference type="Rhea" id="RHEA:17663"/>
    </physiologicalReaction>
</comment>
<comment type="catalytic activity">
    <reaction evidence="1">
        <text>GTP + succinate + CoA = succinyl-CoA + GDP + phosphate</text>
        <dbReference type="Rhea" id="RHEA:22120"/>
        <dbReference type="ChEBI" id="CHEBI:30031"/>
        <dbReference type="ChEBI" id="CHEBI:37565"/>
        <dbReference type="ChEBI" id="CHEBI:43474"/>
        <dbReference type="ChEBI" id="CHEBI:57287"/>
        <dbReference type="ChEBI" id="CHEBI:57292"/>
        <dbReference type="ChEBI" id="CHEBI:58189"/>
    </reaction>
    <physiologicalReaction direction="right-to-left" evidence="1">
        <dbReference type="Rhea" id="RHEA:22122"/>
    </physiologicalReaction>
</comment>
<comment type="cofactor">
    <cofactor evidence="1">
        <name>Mg(2+)</name>
        <dbReference type="ChEBI" id="CHEBI:18420"/>
    </cofactor>
    <text evidence="1">Binds 1 Mg(2+) ion per subunit.</text>
</comment>
<comment type="pathway">
    <text evidence="1">Carbohydrate metabolism; tricarboxylic acid cycle; succinate from succinyl-CoA (ligase route): step 1/1.</text>
</comment>
<comment type="subunit">
    <text evidence="1">Heterotetramer of two alpha and two beta subunits.</text>
</comment>
<comment type="similarity">
    <text evidence="1">Belongs to the succinate/malate CoA ligase beta subunit family.</text>
</comment>
<keyword id="KW-0067">ATP-binding</keyword>
<keyword id="KW-0436">Ligase</keyword>
<keyword id="KW-0460">Magnesium</keyword>
<keyword id="KW-0479">Metal-binding</keyword>
<keyword id="KW-0547">Nucleotide-binding</keyword>
<keyword id="KW-1185">Reference proteome</keyword>
<keyword id="KW-0816">Tricarboxylic acid cycle</keyword>
<proteinExistence type="inferred from homology"/>
<sequence>MKVHEHQAKEIFARYGLPVPKGYPAFTVEEAVEAAQQLGKFPVVVKAQIHAGGRGKAGGVKLANNLDEVQKYAAELLGKTLVTFQTGPEGLPVSRIYIEEGTNIDKEFYVAITLDRSKSKLIIMASSEGGMEIEEVAAKNPEAIITEVIDPFLGLRPYQAREIALKLGLPKNLLNKAAGLFVKLYELYMKEDASMVEINPLVLTKEGNIVILDAKVDFDDNALFRHPDIMEMEDPTQESELEVKAKQYNLNYIKLDGNIACMVNGAGLAMATMDTIKLAGGEPANFLDVGGSANAEQIANAFKIILSDPNVKAIFINIFGGILRCDRLAEGIIQASKEVNPHVPIIVRMEGTNVELGKKMLAESGLDLIPADTMWEGAKKAVELASKA</sequence>
<accession>C0QQH3</accession>
<protein>
    <recommendedName>
        <fullName evidence="1">Succinate--CoA ligase [ADP-forming] subunit beta</fullName>
        <ecNumber evidence="1">6.2.1.5</ecNumber>
    </recommendedName>
    <alternativeName>
        <fullName evidence="1">Succinyl-CoA synthetase subunit beta</fullName>
        <shortName evidence="1">SCS-beta</shortName>
    </alternativeName>
</protein>